<keyword id="KW-0472">Membrane</keyword>
<keyword id="KW-1185">Reference proteome</keyword>
<keyword id="KW-0812">Transmembrane</keyword>
<keyword id="KW-1133">Transmembrane helix</keyword>
<reference key="1">
    <citation type="journal article" date="2005" name="BMC Genomics">
        <title>Characterization of 954 bovine full-CDS cDNA sequences.</title>
        <authorList>
            <person name="Harhay G.P."/>
            <person name="Sonstegard T.S."/>
            <person name="Keele J.W."/>
            <person name="Heaton M.P."/>
            <person name="Clawson M.L."/>
            <person name="Snelling W.M."/>
            <person name="Wiedmann R.T."/>
            <person name="Van Tassell C.P."/>
            <person name="Smith T.P.L."/>
        </authorList>
    </citation>
    <scope>NUCLEOTIDE SEQUENCE [LARGE SCALE MRNA]</scope>
</reference>
<reference key="2">
    <citation type="submission" date="2005-08" db="EMBL/GenBank/DDBJ databases">
        <authorList>
            <consortium name="NIH - Mammalian Gene Collection (MGC) project"/>
        </authorList>
    </citation>
    <scope>NUCLEOTIDE SEQUENCE [LARGE SCALE MRNA]</scope>
    <source>
        <strain>Crossbred X Angus</strain>
        <tissue>Ileum</tissue>
    </source>
</reference>
<feature type="chain" id="PRO_0000249573" description="Transmembrane protein 171">
    <location>
        <begin position="1"/>
        <end position="326"/>
    </location>
</feature>
<feature type="transmembrane region" description="Helical" evidence="1">
    <location>
        <begin position="22"/>
        <end position="42"/>
    </location>
</feature>
<feature type="transmembrane region" description="Helical" evidence="1">
    <location>
        <begin position="57"/>
        <end position="77"/>
    </location>
</feature>
<feature type="transmembrane region" description="Helical" evidence="1">
    <location>
        <begin position="114"/>
        <end position="134"/>
    </location>
</feature>
<feature type="transmembrane region" description="Helical" evidence="1">
    <location>
        <begin position="161"/>
        <end position="181"/>
    </location>
</feature>
<feature type="region of interest" description="Disordered" evidence="2">
    <location>
        <begin position="229"/>
        <end position="326"/>
    </location>
</feature>
<feature type="compositionally biased region" description="Low complexity" evidence="2">
    <location>
        <begin position="230"/>
        <end position="240"/>
    </location>
</feature>
<feature type="compositionally biased region" description="Polar residues" evidence="2">
    <location>
        <begin position="257"/>
        <end position="266"/>
    </location>
</feature>
<feature type="compositionally biased region" description="Low complexity" evidence="2">
    <location>
        <begin position="288"/>
        <end position="302"/>
    </location>
</feature>
<feature type="compositionally biased region" description="Low complexity" evidence="2">
    <location>
        <begin position="312"/>
        <end position="326"/>
    </location>
</feature>
<feature type="sequence conflict" description="In Ref. 2; AAI02969." evidence="3" ref="2">
    <original>P</original>
    <variation>L</variation>
    <location>
        <position position="325"/>
    </location>
</feature>
<protein>
    <recommendedName>
        <fullName>Transmembrane protein 171</fullName>
    </recommendedName>
</protein>
<comment type="subcellular location">
    <subcellularLocation>
        <location evidence="3">Membrane</location>
        <topology evidence="3">Multi-pass membrane protein</topology>
    </subcellularLocation>
</comment>
<gene>
    <name type="primary">TMEM171</name>
</gene>
<proteinExistence type="evidence at transcript level"/>
<organism>
    <name type="scientific">Bos taurus</name>
    <name type="common">Bovine</name>
    <dbReference type="NCBI Taxonomy" id="9913"/>
    <lineage>
        <taxon>Eukaryota</taxon>
        <taxon>Metazoa</taxon>
        <taxon>Chordata</taxon>
        <taxon>Craniata</taxon>
        <taxon>Vertebrata</taxon>
        <taxon>Euteleostomi</taxon>
        <taxon>Mammalia</taxon>
        <taxon>Eutheria</taxon>
        <taxon>Laurasiatheria</taxon>
        <taxon>Artiodactyla</taxon>
        <taxon>Ruminantia</taxon>
        <taxon>Pecora</taxon>
        <taxon>Bovidae</taxon>
        <taxon>Bovinae</taxon>
        <taxon>Bos</taxon>
    </lineage>
</organism>
<name>TM171_BOVIN</name>
<accession>Q58DS4</accession>
<accession>Q3SZB9</accession>
<dbReference type="EMBL" id="BT021523">
    <property type="protein sequence ID" value="AAX46370.1"/>
    <property type="molecule type" value="mRNA"/>
</dbReference>
<dbReference type="EMBL" id="BC102968">
    <property type="protein sequence ID" value="AAI02969.1"/>
    <property type="molecule type" value="mRNA"/>
</dbReference>
<dbReference type="RefSeq" id="NP_001014951.2">
    <property type="nucleotide sequence ID" value="NM_001014951.3"/>
</dbReference>
<dbReference type="RefSeq" id="XP_005221470.1">
    <property type="nucleotide sequence ID" value="XM_005221413.4"/>
</dbReference>
<dbReference type="FunCoup" id="Q58DS4">
    <property type="interactions" value="42"/>
</dbReference>
<dbReference type="STRING" id="9913.ENSBTAP00000036676"/>
<dbReference type="PaxDb" id="9913-ENSBTAP00000036676"/>
<dbReference type="Ensembl" id="ENSBTAT00000036824.3">
    <property type="protein sequence ID" value="ENSBTAP00000036676.1"/>
    <property type="gene ID" value="ENSBTAG00000008494.4"/>
</dbReference>
<dbReference type="GeneID" id="538802"/>
<dbReference type="KEGG" id="bta:538802"/>
<dbReference type="CTD" id="134285"/>
<dbReference type="VEuPathDB" id="HostDB:ENSBTAG00000008494"/>
<dbReference type="VGNC" id="VGNC:35996">
    <property type="gene designation" value="TMEM171"/>
</dbReference>
<dbReference type="eggNOG" id="ENOG502QRR0">
    <property type="taxonomic scope" value="Eukaryota"/>
</dbReference>
<dbReference type="GeneTree" id="ENSGT00390000017024"/>
<dbReference type="HOGENOM" id="CLU_900031_0_0_1"/>
<dbReference type="InParanoid" id="Q58DS4"/>
<dbReference type="OMA" id="WHTIQLN"/>
<dbReference type="OrthoDB" id="9940935at2759"/>
<dbReference type="TreeFam" id="TF335590"/>
<dbReference type="Proteomes" id="UP000009136">
    <property type="component" value="Chromosome 20"/>
</dbReference>
<dbReference type="Bgee" id="ENSBTAG00000008494">
    <property type="expression patterns" value="Expressed in rumen papilla and 68 other cell types or tissues"/>
</dbReference>
<dbReference type="GO" id="GO:0016020">
    <property type="term" value="C:membrane"/>
    <property type="evidence" value="ECO:0007669"/>
    <property type="project" value="UniProtKB-SubCell"/>
</dbReference>
<dbReference type="InterPro" id="IPR029173">
    <property type="entry name" value="TMEM171"/>
</dbReference>
<dbReference type="PANTHER" id="PTHR31617">
    <property type="entry name" value="TRANSMEMBRANE PROTEIN 171"/>
    <property type="match status" value="1"/>
</dbReference>
<dbReference type="PANTHER" id="PTHR31617:SF0">
    <property type="entry name" value="TRANSMEMBRANE PROTEIN 171"/>
    <property type="match status" value="1"/>
</dbReference>
<dbReference type="Pfam" id="PF15471">
    <property type="entry name" value="TMEM171"/>
    <property type="match status" value="1"/>
</dbReference>
<evidence type="ECO:0000255" key="1"/>
<evidence type="ECO:0000256" key="2">
    <source>
        <dbReference type="SAM" id="MobiDB-lite"/>
    </source>
</evidence>
<evidence type="ECO:0000305" key="3"/>
<sequence length="326" mass="34911">MSPAAAAEPDGVRGDRHVSKLIFFLFVIGAILLCVGVLLSIFGFQACQYKTFPDCSMMLKIAGPACAVVGLGAVILARSRARLQQTEERLRGNNQADSDRPFLCGESRQFVQCLIFGFLFLTSGMLISVLGIWVPGCGSDWMQESLNETDTADSEPQICGFLSLQILGPLIVLVGLCFFVVAHVKKRSNLNGDQDASESEERQTQSLEPIQVTVGDAVIIFPPPPPPYFPESSASAAARSPGTDGLLPDESPPSYYSIFQSGSPTPEGQGAASERDCELIYTISGTASSSETSHTLHLLSELPPRYEEKETATTTSLSPSSEPSPP</sequence>